<sequence>MWRFSGRRGLCAVQRLSCGRVHHRVWREKSDQACERALQYKVGEKIHGFTVNQVTPVPELFLTAVKLSHDNTGARYLHLAREDKNNLFSVQFRTTPMDSTGVPHVLEHTVLCGSQKYPCRDPFFKMLNRSLSTFMNAMTASDYTIYPFSTQNPKDFQNLLSVYLDATFFPCLRELDFWQEGWRLEHENPRDPQTPLIFKGVVFNEMKGAFTDNERIFSQHLQNKLLPDHTYSVVSGGDPLCIPELTWEQLKQFHATHYHPSNARFFTYGNFQLEGHLKQIHEEALSKFQRLEQSTAVPAQPHWDKPREFHITCGPDSLATETAKQTTVSVSFLLPDITDTFEAFTLSLLSSLLIAGPNSPFYKALIESGLGTDFSPDVGYNGYTREAYFSVGLQGIAEKDVKTVRELVDRTIEEVIEKGFEDDRIEALLHKIEIQTKHQSASFGLTLTSYIASCWNHDGDPVELLQIGSQLTRFRKCLKENPKFLQEKVEQYFKNNQHKLTLSMKPDDKYYEKQTQMETEKLEQKVNSLSPADKQQIYEKGLELQTQQSKHQDASCLPALKVSDIEPSMPFTKLDIGLAAGDIPVQYCPQPTNGMVYFRAFSSLNTLPEDLRPIVPLFCSVLTKLGCGILNYREQAQQIELKTGGMSVTPHVLPDDSQLDTYEQGVLFSSLCLERNLPDMMHLWSEIFNNPCFEEEEHFKVLVKMTAQELSNGISDSGHLYAALRASKTLTPSGDLQETFSGMDQVKVMKRIAEMTDIKPILRKLPRIKKYLLNCDNMRCSVNATPQQMPQAEKEVENFLRNVGRSKKERKPVRPHIVEKPTPSGPSGAAHVSGSQIVRKLVTDPTFKPCQMKTHFVLPFPVNYIGECVRTVPYADPDHASLKILARLMTAKFLHTEIREKGGAYGGGAKLTHSGIFTLYSYRDPNSIETLQSFGKAVDWAKSGKFTQQDIDEAKLSVFSTVDSPVAPSDKGMDHFLYGLSDEMKQAYREQLFAVNHDKLTSVSHKYLGIGKSTHGLAILGPENSKIAKDPSWIIK</sequence>
<gene>
    <name evidence="10" type="primary">Pitrm1</name>
    <name evidence="9" type="synonym">Kiaa1104</name>
    <name evidence="8" type="synonym">Ntup1</name>
</gene>
<protein>
    <recommendedName>
        <fullName evidence="7">Presequence protease, mitochondrial</fullName>
        <ecNumber evidence="2">3.4.24.-</ecNumber>
    </recommendedName>
    <alternativeName>
        <fullName evidence="2">Pitrilysin metalloproteinase 1</fullName>
    </alternativeName>
</protein>
<organism>
    <name type="scientific">Mus musculus</name>
    <name type="common">Mouse</name>
    <dbReference type="NCBI Taxonomy" id="10090"/>
    <lineage>
        <taxon>Eukaryota</taxon>
        <taxon>Metazoa</taxon>
        <taxon>Chordata</taxon>
        <taxon>Craniata</taxon>
        <taxon>Vertebrata</taxon>
        <taxon>Euteleostomi</taxon>
        <taxon>Mammalia</taxon>
        <taxon>Eutheria</taxon>
        <taxon>Euarchontoglires</taxon>
        <taxon>Glires</taxon>
        <taxon>Rodentia</taxon>
        <taxon>Myomorpha</taxon>
        <taxon>Muroidea</taxon>
        <taxon>Muridae</taxon>
        <taxon>Murinae</taxon>
        <taxon>Mus</taxon>
        <taxon>Mus</taxon>
    </lineage>
</organism>
<reference key="1">
    <citation type="journal article" date="2003" name="Dev. Biol.">
        <title>Expression profiling of placentomegaly associated with nuclear transplantation of mouse ES cells.</title>
        <authorList>
            <person name="Suemizu H."/>
            <person name="Aiba K."/>
            <person name="Yoshikawa T."/>
            <person name="Sharov A.A."/>
            <person name="Shimozawa N."/>
            <person name="Tamaoki N."/>
            <person name="Ko M.S.H."/>
        </authorList>
    </citation>
    <scope>NUCLEOTIDE SEQUENCE [MRNA] (ISOFORM 1)</scope>
    <scope>INDUCTION</scope>
    <source>
        <strain>C57BL/6J</strain>
    </source>
</reference>
<reference key="2">
    <citation type="journal article" date="2005" name="Diabetes">
        <title>Fine-mapping gene-by-diet interactions on chromosome 13 in a LG/J x SM/J murine model of obesity.</title>
        <authorList>
            <person name="Ehrich T.H."/>
            <person name="Hrbek T."/>
            <person name="Kenney-Hunt J.P."/>
            <person name="Pletscher L.S."/>
            <person name="Wang B."/>
            <person name="Semenkovich C.F."/>
            <person name="Cheverud J.M."/>
        </authorList>
    </citation>
    <scope>NUCLEOTIDE SEQUENCE [MRNA] (ISOFORM 1)</scope>
    <scope>VARIANTS GLN-15; ILE-17; CYS-19; MET-462; LYS-546 AND VAL-583</scope>
    <source>
        <strain>LG/J</strain>
        <strain>SM/J</strain>
    </source>
</reference>
<reference key="3">
    <citation type="journal article" date="2005" name="Science">
        <title>The transcriptional landscape of the mammalian genome.</title>
        <authorList>
            <person name="Carninci P."/>
            <person name="Kasukawa T."/>
            <person name="Katayama S."/>
            <person name="Gough J."/>
            <person name="Frith M.C."/>
            <person name="Maeda N."/>
            <person name="Oyama R."/>
            <person name="Ravasi T."/>
            <person name="Lenhard B."/>
            <person name="Wells C."/>
            <person name="Kodzius R."/>
            <person name="Shimokawa K."/>
            <person name="Bajic V.B."/>
            <person name="Brenner S.E."/>
            <person name="Batalov S."/>
            <person name="Forrest A.R."/>
            <person name="Zavolan M."/>
            <person name="Davis M.J."/>
            <person name="Wilming L.G."/>
            <person name="Aidinis V."/>
            <person name="Allen J.E."/>
            <person name="Ambesi-Impiombato A."/>
            <person name="Apweiler R."/>
            <person name="Aturaliya R.N."/>
            <person name="Bailey T.L."/>
            <person name="Bansal M."/>
            <person name="Baxter L."/>
            <person name="Beisel K.W."/>
            <person name="Bersano T."/>
            <person name="Bono H."/>
            <person name="Chalk A.M."/>
            <person name="Chiu K.P."/>
            <person name="Choudhary V."/>
            <person name="Christoffels A."/>
            <person name="Clutterbuck D.R."/>
            <person name="Crowe M.L."/>
            <person name="Dalla E."/>
            <person name="Dalrymple B.P."/>
            <person name="de Bono B."/>
            <person name="Della Gatta G."/>
            <person name="di Bernardo D."/>
            <person name="Down T."/>
            <person name="Engstrom P."/>
            <person name="Fagiolini M."/>
            <person name="Faulkner G."/>
            <person name="Fletcher C.F."/>
            <person name="Fukushima T."/>
            <person name="Furuno M."/>
            <person name="Futaki S."/>
            <person name="Gariboldi M."/>
            <person name="Georgii-Hemming P."/>
            <person name="Gingeras T.R."/>
            <person name="Gojobori T."/>
            <person name="Green R.E."/>
            <person name="Gustincich S."/>
            <person name="Harbers M."/>
            <person name="Hayashi Y."/>
            <person name="Hensch T.K."/>
            <person name="Hirokawa N."/>
            <person name="Hill D."/>
            <person name="Huminiecki L."/>
            <person name="Iacono M."/>
            <person name="Ikeo K."/>
            <person name="Iwama A."/>
            <person name="Ishikawa T."/>
            <person name="Jakt M."/>
            <person name="Kanapin A."/>
            <person name="Katoh M."/>
            <person name="Kawasawa Y."/>
            <person name="Kelso J."/>
            <person name="Kitamura H."/>
            <person name="Kitano H."/>
            <person name="Kollias G."/>
            <person name="Krishnan S.P."/>
            <person name="Kruger A."/>
            <person name="Kummerfeld S.K."/>
            <person name="Kurochkin I.V."/>
            <person name="Lareau L.F."/>
            <person name="Lazarevic D."/>
            <person name="Lipovich L."/>
            <person name="Liu J."/>
            <person name="Liuni S."/>
            <person name="McWilliam S."/>
            <person name="Madan Babu M."/>
            <person name="Madera M."/>
            <person name="Marchionni L."/>
            <person name="Matsuda H."/>
            <person name="Matsuzawa S."/>
            <person name="Miki H."/>
            <person name="Mignone F."/>
            <person name="Miyake S."/>
            <person name="Morris K."/>
            <person name="Mottagui-Tabar S."/>
            <person name="Mulder N."/>
            <person name="Nakano N."/>
            <person name="Nakauchi H."/>
            <person name="Ng P."/>
            <person name="Nilsson R."/>
            <person name="Nishiguchi S."/>
            <person name="Nishikawa S."/>
            <person name="Nori F."/>
            <person name="Ohara O."/>
            <person name="Okazaki Y."/>
            <person name="Orlando V."/>
            <person name="Pang K.C."/>
            <person name="Pavan W.J."/>
            <person name="Pavesi G."/>
            <person name="Pesole G."/>
            <person name="Petrovsky N."/>
            <person name="Piazza S."/>
            <person name="Reed J."/>
            <person name="Reid J.F."/>
            <person name="Ring B.Z."/>
            <person name="Ringwald M."/>
            <person name="Rost B."/>
            <person name="Ruan Y."/>
            <person name="Salzberg S.L."/>
            <person name="Sandelin A."/>
            <person name="Schneider C."/>
            <person name="Schoenbach C."/>
            <person name="Sekiguchi K."/>
            <person name="Semple C.A."/>
            <person name="Seno S."/>
            <person name="Sessa L."/>
            <person name="Sheng Y."/>
            <person name="Shibata Y."/>
            <person name="Shimada H."/>
            <person name="Shimada K."/>
            <person name="Silva D."/>
            <person name="Sinclair B."/>
            <person name="Sperling S."/>
            <person name="Stupka E."/>
            <person name="Sugiura K."/>
            <person name="Sultana R."/>
            <person name="Takenaka Y."/>
            <person name="Taki K."/>
            <person name="Tammoja K."/>
            <person name="Tan S.L."/>
            <person name="Tang S."/>
            <person name="Taylor M.S."/>
            <person name="Tegner J."/>
            <person name="Teichmann S.A."/>
            <person name="Ueda H.R."/>
            <person name="van Nimwegen E."/>
            <person name="Verardo R."/>
            <person name="Wei C.L."/>
            <person name="Yagi K."/>
            <person name="Yamanishi H."/>
            <person name="Zabarovsky E."/>
            <person name="Zhu S."/>
            <person name="Zimmer A."/>
            <person name="Hide W."/>
            <person name="Bult C."/>
            <person name="Grimmond S.M."/>
            <person name="Teasdale R.D."/>
            <person name="Liu E.T."/>
            <person name="Brusic V."/>
            <person name="Quackenbush J."/>
            <person name="Wahlestedt C."/>
            <person name="Mattick J.S."/>
            <person name="Hume D.A."/>
            <person name="Kai C."/>
            <person name="Sasaki D."/>
            <person name="Tomaru Y."/>
            <person name="Fukuda S."/>
            <person name="Kanamori-Katayama M."/>
            <person name="Suzuki M."/>
            <person name="Aoki J."/>
            <person name="Arakawa T."/>
            <person name="Iida J."/>
            <person name="Imamura K."/>
            <person name="Itoh M."/>
            <person name="Kato T."/>
            <person name="Kawaji H."/>
            <person name="Kawagashira N."/>
            <person name="Kawashima T."/>
            <person name="Kojima M."/>
            <person name="Kondo S."/>
            <person name="Konno H."/>
            <person name="Nakano K."/>
            <person name="Ninomiya N."/>
            <person name="Nishio T."/>
            <person name="Okada M."/>
            <person name="Plessy C."/>
            <person name="Shibata K."/>
            <person name="Shiraki T."/>
            <person name="Suzuki S."/>
            <person name="Tagami M."/>
            <person name="Waki K."/>
            <person name="Watahiki A."/>
            <person name="Okamura-Oho Y."/>
            <person name="Suzuki H."/>
            <person name="Kawai J."/>
            <person name="Hayashizaki Y."/>
        </authorList>
    </citation>
    <scope>NUCLEOTIDE SEQUENCE [LARGE SCALE MRNA] (ISOFORMS 1; 2 AND 3)</scope>
    <source>
        <strain>BALB/cJ</strain>
        <strain>C57BL/6J</strain>
        <tissue>Amnion</tissue>
        <tissue>Tongue</tissue>
    </source>
</reference>
<reference key="4">
    <citation type="journal article" date="2003" name="DNA Res.">
        <title>Prediction of the coding sequences of mouse homologues of KIAA gene: III. The complete nucleotide sequences of 500 mouse KIAA-homologous cDNAs identified by screening of terminal sequences of cDNA clones randomly sampled from size-fractionated libraries.</title>
        <authorList>
            <person name="Okazaki N."/>
            <person name="Kikuno R."/>
            <person name="Ohara R."/>
            <person name="Inamoto S."/>
            <person name="Koseki H."/>
            <person name="Hiraoka S."/>
            <person name="Saga Y."/>
            <person name="Nagase T."/>
            <person name="Ohara O."/>
            <person name="Koga H."/>
        </authorList>
    </citation>
    <scope>NUCLEOTIDE SEQUENCE [LARGE SCALE MRNA] OF 4-1036 (ISOFORM 1)</scope>
    <source>
        <tissue>Embryonic tail</tissue>
    </source>
</reference>
<reference key="5">
    <citation type="journal article" date="2004" name="Genome Res.">
        <title>The status, quality, and expansion of the NIH full-length cDNA project: the Mammalian Gene Collection (MGC).</title>
        <authorList>
            <consortium name="The MGC Project Team"/>
        </authorList>
    </citation>
    <scope>NUCLEOTIDE SEQUENCE [LARGE SCALE MRNA] OF 395-1036</scope>
    <source>
        <strain>FVB/N</strain>
        <tissue>Mammary tumor</tissue>
    </source>
</reference>
<reference key="6">
    <citation type="journal article" date="2010" name="Cell">
        <title>A tissue-specific atlas of mouse protein phosphorylation and expression.</title>
        <authorList>
            <person name="Huttlin E.L."/>
            <person name="Jedrychowski M.P."/>
            <person name="Elias J.E."/>
            <person name="Goswami T."/>
            <person name="Rad R."/>
            <person name="Beausoleil S.A."/>
            <person name="Villen J."/>
            <person name="Haas W."/>
            <person name="Sowa M.E."/>
            <person name="Gygi S.P."/>
        </authorList>
    </citation>
    <scope>IDENTIFICATION BY MASS SPECTROMETRY [LARGE SCALE ANALYSIS]</scope>
    <source>
        <tissue>Brain</tissue>
        <tissue>Brown adipose tissue</tissue>
        <tissue>Heart</tissue>
        <tissue>Kidney</tissue>
        <tissue>Liver</tissue>
        <tissue>Lung</tissue>
        <tissue>Pancreas</tissue>
        <tissue>Spleen</tissue>
        <tissue>Testis</tissue>
    </source>
</reference>
<reference key="7">
    <citation type="journal article" date="2013" name="Mol. Cell">
        <title>SIRT5-mediated lysine desuccinylation impacts diverse metabolic pathways.</title>
        <authorList>
            <person name="Park J."/>
            <person name="Chen Y."/>
            <person name="Tishkoff D.X."/>
            <person name="Peng C."/>
            <person name="Tan M."/>
            <person name="Dai L."/>
            <person name="Xie Z."/>
            <person name="Zhang Y."/>
            <person name="Zwaans B.M."/>
            <person name="Skinner M.E."/>
            <person name="Lombard D.B."/>
            <person name="Zhao Y."/>
        </authorList>
    </citation>
    <scope>ACETYLATION [LARGE SCALE ANALYSIS] AT LYS-759</scope>
    <scope>SUCCINYLATION [LARGE SCALE ANALYSIS] AT LYS-770; LYS-848 AND LYS-945</scope>
    <scope>IDENTIFICATION BY MASS SPECTROMETRY [LARGE SCALE ANALYSIS]</scope>
    <source>
        <tissue>Embryonic fibroblast</tissue>
        <tissue>Liver</tissue>
    </source>
</reference>
<reference key="8">
    <citation type="journal article" date="2013" name="Proc. Natl. Acad. Sci. U.S.A.">
        <title>Label-free quantitative proteomics of the lysine acetylome in mitochondria identifies substrates of SIRT3 in metabolic pathways.</title>
        <authorList>
            <person name="Rardin M.J."/>
            <person name="Newman J.C."/>
            <person name="Held J.M."/>
            <person name="Cusack M.P."/>
            <person name="Sorensen D.J."/>
            <person name="Li B."/>
            <person name="Schilling B."/>
            <person name="Mooney S.D."/>
            <person name="Kahn C.R."/>
            <person name="Verdin E."/>
            <person name="Gibson B.W."/>
        </authorList>
    </citation>
    <scope>ACETYLATION [LARGE SCALE ANALYSIS] AT LYS-770 AND LYS-883</scope>
    <scope>IDENTIFICATION BY MASS SPECTROMETRY [LARGE SCALE ANALYSIS]</scope>
    <source>
        <tissue>Liver</tissue>
    </source>
</reference>
<accession>Q8K411</accession>
<accession>Q3THC4</accession>
<accession>Q3TJI1</accession>
<accession>Q3TPP0</accession>
<accession>Q3URQ8</accession>
<accession>Q4KUG2</accession>
<accession>Q4KUG3</accession>
<accession>Q6ZPX6</accession>
<accession>Q922N1</accession>
<accession>Q9CV63</accession>
<evidence type="ECO:0000250" key="1"/>
<evidence type="ECO:0000250" key="2">
    <source>
        <dbReference type="UniProtKB" id="Q5JRX3"/>
    </source>
</evidence>
<evidence type="ECO:0000256" key="3">
    <source>
        <dbReference type="SAM" id="MobiDB-lite"/>
    </source>
</evidence>
<evidence type="ECO:0000269" key="4">
    <source>
    </source>
</evidence>
<evidence type="ECO:0000269" key="5">
    <source>
    </source>
</evidence>
<evidence type="ECO:0000303" key="6">
    <source>
    </source>
</evidence>
<evidence type="ECO:0000305" key="7"/>
<evidence type="ECO:0000312" key="8">
    <source>
        <dbReference type="EMBL" id="AAM49783.1"/>
    </source>
</evidence>
<evidence type="ECO:0000312" key="9">
    <source>
        <dbReference type="EMBL" id="BAC98102.1"/>
    </source>
</evidence>
<evidence type="ECO:0000312" key="10">
    <source>
        <dbReference type="MGI" id="MGI:1916867"/>
    </source>
</evidence>
<evidence type="ECO:0007744" key="11">
    <source>
    </source>
</evidence>
<evidence type="ECO:0007744" key="12">
    <source>
    </source>
</evidence>
<comment type="function">
    <text evidence="2">Metalloendopeptidase of the mitochondrial matrix that functions in peptide cleavage and degradation rather than in protein processing. Has an ATP-independent activity. Specifically cleaves peptides in the range of 5 to 65 residues. Shows a preference for cleavage after small polar residues and before basic residues, but without any positional preference. Degrades the transit peptides of mitochondrial proteins after their cleavage. Also degrades other unstructured peptides. It is also able to degrade amyloid-beta protein 40, one of the peptides produced by APP processing, when it accumulates in mitochondrion. It is a highly efficient protease, at least toward amyloid-beta protein 40. Cleaves that peptide at a specific position and is probably not processive, releasing digested peptides intermediates that can be further cleaved subsequently. It is also able to degrade amyloid-beta protein 42.</text>
</comment>
<comment type="cofactor">
    <cofactor evidence="2">
        <name>Zn(2+)</name>
        <dbReference type="ChEBI" id="CHEBI:29105"/>
    </cofactor>
    <text evidence="2">Binds 1 zinc ion per subunit.</text>
</comment>
<comment type="activity regulation">
    <text evidence="2">Mainly exists in a closed and catalytically competent conformation but a closed-to-open switch allows substrate entry into the catalytic chamber. Substrate binding induces closure and dimerization. A disulfide bond may lock the enzyme in a closed conformation preventing substrate entry into the catalytic chamber, participating in redox regulation of the enzyme. Inhibited by metal-chelating agents. Inhibited by nickel and zinc excess, and slightly activated by manganese.</text>
</comment>
<comment type="subunit">
    <text evidence="2">Monomer and homodimer; homodimerization is induced by binding of the substrate.</text>
</comment>
<comment type="subcellular location">
    <subcellularLocation>
        <location evidence="2">Mitochondrion matrix</location>
    </subcellularLocation>
</comment>
<comment type="alternative products">
    <event type="alternative splicing"/>
    <isoform>
        <id>Q8K411-1</id>
        <name>1</name>
        <sequence type="displayed"/>
    </isoform>
    <isoform>
        <id>Q8K411-2</id>
        <name>2</name>
        <sequence type="described" ref="VSP_020598"/>
    </isoform>
    <isoform>
        <id>Q8K411-3</id>
        <name>3</name>
        <sequence type="described" ref="VSP_020598 VSP_020599"/>
    </isoform>
</comment>
<comment type="induction">
    <text evidence="4">Up-regulated transplantes nuclei derived from embryonic stem (ES) cells.</text>
</comment>
<comment type="PTM">
    <text evidence="2">A disulfide bond locks the enzyme in the closed conformation preventing substrate entry into the catalytic chamber.</text>
</comment>
<comment type="similarity">
    <text evidence="7">Belongs to the peptidase M16 family. PreP subfamily.</text>
</comment>
<comment type="sequence caution" evidence="7">
    <conflict type="erroneous initiation">
        <sequence resource="EMBL-CDS" id="AAH06917"/>
    </conflict>
    <text>Truncated N-terminus.</text>
</comment>
<dbReference type="EC" id="3.4.24.-" evidence="2"/>
<dbReference type="EMBL" id="AF513714">
    <property type="protein sequence ID" value="AAM49783.1"/>
    <property type="molecule type" value="mRNA"/>
</dbReference>
<dbReference type="EMBL" id="AY779273">
    <property type="protein sequence ID" value="AAX11355.1"/>
    <property type="molecule type" value="mRNA"/>
</dbReference>
<dbReference type="EMBL" id="AY779274">
    <property type="protein sequence ID" value="AAX11356.1"/>
    <property type="molecule type" value="mRNA"/>
</dbReference>
<dbReference type="EMBL" id="AK009313">
    <property type="protein sequence ID" value="BAB26211.1"/>
    <property type="molecule type" value="mRNA"/>
</dbReference>
<dbReference type="EMBL" id="AK141277">
    <property type="protein sequence ID" value="BAE24630.1"/>
    <property type="molecule type" value="mRNA"/>
</dbReference>
<dbReference type="EMBL" id="AK147837">
    <property type="protein sequence ID" value="BAE28172.1"/>
    <property type="molecule type" value="mRNA"/>
</dbReference>
<dbReference type="EMBL" id="AK164235">
    <property type="protein sequence ID" value="BAE37695.1"/>
    <property type="molecule type" value="mRNA"/>
</dbReference>
<dbReference type="EMBL" id="AK167426">
    <property type="protein sequence ID" value="BAE39514.1"/>
    <property type="molecule type" value="mRNA"/>
</dbReference>
<dbReference type="EMBL" id="AK168335">
    <property type="protein sequence ID" value="BAE40273.1"/>
    <property type="molecule type" value="mRNA"/>
</dbReference>
<dbReference type="EMBL" id="AK129292">
    <property type="protein sequence ID" value="BAC98102.1"/>
    <property type="molecule type" value="mRNA"/>
</dbReference>
<dbReference type="EMBL" id="BC006917">
    <property type="protein sequence ID" value="AAH06917.1"/>
    <property type="status" value="ALT_INIT"/>
    <property type="molecule type" value="mRNA"/>
</dbReference>
<dbReference type="CCDS" id="CCDS36585.1">
    <molecule id="Q8K411-1"/>
</dbReference>
<dbReference type="RefSeq" id="NP_001347035.1">
    <molecule id="Q8K411-2"/>
    <property type="nucleotide sequence ID" value="NM_001360106.1"/>
</dbReference>
<dbReference type="RefSeq" id="NP_660113.1">
    <molecule id="Q8K411-1"/>
    <property type="nucleotide sequence ID" value="NM_145131.1"/>
</dbReference>
<dbReference type="RefSeq" id="XP_006516571.1">
    <property type="nucleotide sequence ID" value="XM_006516508.1"/>
</dbReference>
<dbReference type="SMR" id="Q8K411"/>
<dbReference type="BioGRID" id="213572">
    <property type="interactions" value="8"/>
</dbReference>
<dbReference type="FunCoup" id="Q8K411">
    <property type="interactions" value="3258"/>
</dbReference>
<dbReference type="STRING" id="10090.ENSMUSP00000152229"/>
<dbReference type="BindingDB" id="Q8K411"/>
<dbReference type="GlyGen" id="Q8K411">
    <property type="glycosylation" value="3 sites, 1 N-linked glycan (1 site), 1 O-linked glycan (1 site)"/>
</dbReference>
<dbReference type="iPTMnet" id="Q8K411"/>
<dbReference type="PhosphoSitePlus" id="Q8K411"/>
<dbReference type="SwissPalm" id="Q8K411"/>
<dbReference type="jPOST" id="Q8K411"/>
<dbReference type="PaxDb" id="10090-ENSMUSP00000021611"/>
<dbReference type="PeptideAtlas" id="Q8K411"/>
<dbReference type="ProteomicsDB" id="289402">
    <molecule id="Q8K411-1"/>
</dbReference>
<dbReference type="ProteomicsDB" id="289403">
    <molecule id="Q8K411-2"/>
</dbReference>
<dbReference type="ProteomicsDB" id="289404">
    <molecule id="Q8K411-3"/>
</dbReference>
<dbReference type="Pumba" id="Q8K411"/>
<dbReference type="Antibodypedia" id="1721">
    <property type="antibodies" value="190 antibodies from 30 providers"/>
</dbReference>
<dbReference type="DNASU" id="69617"/>
<dbReference type="Ensembl" id="ENSMUST00000021611.10">
    <molecule id="Q8K411-3"/>
    <property type="protein sequence ID" value="ENSMUSP00000021611.10"/>
    <property type="gene ID" value="ENSMUSG00000021193.11"/>
</dbReference>
<dbReference type="Ensembl" id="ENSMUST00000222485.2">
    <molecule id="Q8K411-1"/>
    <property type="protein sequence ID" value="ENSMUSP00000152229.2"/>
    <property type="gene ID" value="ENSMUSG00000021193.11"/>
</dbReference>
<dbReference type="GeneID" id="69617"/>
<dbReference type="KEGG" id="mmu:69617"/>
<dbReference type="UCSC" id="uc007pjx.1">
    <molecule id="Q8K411-1"/>
    <property type="organism name" value="mouse"/>
</dbReference>
<dbReference type="UCSC" id="uc007pjy.1">
    <molecule id="Q8K411-2"/>
    <property type="organism name" value="mouse"/>
</dbReference>
<dbReference type="UCSC" id="uc011ywa.1">
    <molecule id="Q8K411-3"/>
    <property type="organism name" value="mouse"/>
</dbReference>
<dbReference type="AGR" id="MGI:1916867"/>
<dbReference type="CTD" id="10531"/>
<dbReference type="MGI" id="MGI:1916867">
    <property type="gene designation" value="Pitrm1"/>
</dbReference>
<dbReference type="VEuPathDB" id="HostDB:ENSMUSG00000021193"/>
<dbReference type="eggNOG" id="KOG2019">
    <property type="taxonomic scope" value="Eukaryota"/>
</dbReference>
<dbReference type="GeneTree" id="ENSGT00390000018381"/>
<dbReference type="HOGENOM" id="CLU_009165_0_0_1"/>
<dbReference type="InParanoid" id="Q8K411"/>
<dbReference type="OMA" id="NYLYYIR"/>
<dbReference type="OrthoDB" id="10250783at2759"/>
<dbReference type="PhylomeDB" id="Q8K411"/>
<dbReference type="TreeFam" id="TF300333"/>
<dbReference type="BRENDA" id="3.4.24.56">
    <property type="organism ID" value="3474"/>
</dbReference>
<dbReference type="Reactome" id="R-MMU-1268020">
    <property type="pathway name" value="Mitochondrial protein import"/>
</dbReference>
<dbReference type="BioGRID-ORCS" id="69617">
    <property type="hits" value="15 hits in 78 CRISPR screens"/>
</dbReference>
<dbReference type="ChiTaRS" id="Pitrm1">
    <property type="organism name" value="mouse"/>
</dbReference>
<dbReference type="PRO" id="PR:Q8K411"/>
<dbReference type="Proteomes" id="UP000000589">
    <property type="component" value="Chromosome 13"/>
</dbReference>
<dbReference type="RNAct" id="Q8K411">
    <property type="molecule type" value="protein"/>
</dbReference>
<dbReference type="Bgee" id="ENSMUSG00000021193">
    <property type="expression patterns" value="Expressed in embryonic post-anal tail and 294 other cell types or tissues"/>
</dbReference>
<dbReference type="ExpressionAtlas" id="Q8K411">
    <property type="expression patterns" value="baseline and differential"/>
</dbReference>
<dbReference type="GO" id="GO:0005759">
    <property type="term" value="C:mitochondrial matrix"/>
    <property type="evidence" value="ECO:0000250"/>
    <property type="project" value="UniProtKB"/>
</dbReference>
<dbReference type="GO" id="GO:0005739">
    <property type="term" value="C:mitochondrion"/>
    <property type="evidence" value="ECO:0007005"/>
    <property type="project" value="MGI"/>
</dbReference>
<dbReference type="GO" id="GO:0004222">
    <property type="term" value="F:metalloendopeptidase activity"/>
    <property type="evidence" value="ECO:0000250"/>
    <property type="project" value="UniProtKB"/>
</dbReference>
<dbReference type="GO" id="GO:0008270">
    <property type="term" value="F:zinc ion binding"/>
    <property type="evidence" value="ECO:0007669"/>
    <property type="project" value="Ensembl"/>
</dbReference>
<dbReference type="GO" id="GO:0006508">
    <property type="term" value="P:proteolysis"/>
    <property type="evidence" value="ECO:0000250"/>
    <property type="project" value="UniProtKB"/>
</dbReference>
<dbReference type="FunFam" id="3.30.830.10:FF:000013">
    <property type="entry name" value="Mitochondrial presequence protease"/>
    <property type="match status" value="1"/>
</dbReference>
<dbReference type="FunFam" id="3.30.830.10:FF:000020">
    <property type="entry name" value="Mitochondrial presequence protease"/>
    <property type="match status" value="1"/>
</dbReference>
<dbReference type="FunFam" id="3.30.830.10:FF:000009">
    <property type="entry name" value="Presequence protease, mitochondrial"/>
    <property type="match status" value="1"/>
</dbReference>
<dbReference type="FunFam" id="3.30.830.10:FF:000011">
    <property type="entry name" value="Presequence protease, mitochondrial"/>
    <property type="match status" value="1"/>
</dbReference>
<dbReference type="Gene3D" id="3.30.830.10">
    <property type="entry name" value="Metalloenzyme, LuxS/M16 peptidase-like"/>
    <property type="match status" value="4"/>
</dbReference>
<dbReference type="InterPro" id="IPR011249">
    <property type="entry name" value="Metalloenz_LuxS/M16"/>
</dbReference>
<dbReference type="InterPro" id="IPR011765">
    <property type="entry name" value="Pept_M16_N"/>
</dbReference>
<dbReference type="InterPro" id="IPR007863">
    <property type="entry name" value="Peptidase_M16_C"/>
</dbReference>
<dbReference type="InterPro" id="IPR013578">
    <property type="entry name" value="Peptidase_M16C_assoc"/>
</dbReference>
<dbReference type="InterPro" id="IPR055130">
    <property type="entry name" value="PreP_C"/>
</dbReference>
<dbReference type="PANTHER" id="PTHR43016">
    <property type="entry name" value="PRESEQUENCE PROTEASE"/>
    <property type="match status" value="1"/>
</dbReference>
<dbReference type="PANTHER" id="PTHR43016:SF13">
    <property type="entry name" value="PRESEQUENCE PROTEASE, MITOCHONDRIAL"/>
    <property type="match status" value="1"/>
</dbReference>
<dbReference type="Pfam" id="PF08367">
    <property type="entry name" value="M16C_assoc"/>
    <property type="match status" value="1"/>
</dbReference>
<dbReference type="Pfam" id="PF00675">
    <property type="entry name" value="Peptidase_M16"/>
    <property type="match status" value="1"/>
</dbReference>
<dbReference type="Pfam" id="PF05193">
    <property type="entry name" value="Peptidase_M16_C"/>
    <property type="match status" value="1"/>
</dbReference>
<dbReference type="Pfam" id="PF22516">
    <property type="entry name" value="PreP_C"/>
    <property type="match status" value="1"/>
</dbReference>
<dbReference type="SMART" id="SM01264">
    <property type="entry name" value="M16C_associated"/>
    <property type="match status" value="1"/>
</dbReference>
<dbReference type="SUPFAM" id="SSF63411">
    <property type="entry name" value="LuxS/MPP-like metallohydrolase"/>
    <property type="match status" value="4"/>
</dbReference>
<proteinExistence type="evidence at protein level"/>
<name>PREP_MOUSE</name>
<keyword id="KW-0007">Acetylation</keyword>
<keyword id="KW-0025">Alternative splicing</keyword>
<keyword id="KW-1015">Disulfide bond</keyword>
<keyword id="KW-0378">Hydrolase</keyword>
<keyword id="KW-0479">Metal-binding</keyword>
<keyword id="KW-0482">Metalloprotease</keyword>
<keyword id="KW-0496">Mitochondrion</keyword>
<keyword id="KW-0645">Protease</keyword>
<keyword id="KW-1185">Reference proteome</keyword>
<keyword id="KW-0809">Transit peptide</keyword>
<keyword id="KW-0862">Zinc</keyword>
<feature type="transit peptide" description="Mitochondrion" evidence="1">
    <location>
        <begin position="1"/>
        <end position="15"/>
    </location>
</feature>
<feature type="chain" id="PRO_0000249932" description="Presequence protease, mitochondrial">
    <location>
        <begin position="16"/>
        <end position="1036"/>
    </location>
</feature>
<feature type="region of interest" description="Disordered" evidence="3">
    <location>
        <begin position="806"/>
        <end position="833"/>
    </location>
</feature>
<feature type="active site" description="Proton acceptor" evidence="2">
    <location>
        <position position="107"/>
    </location>
</feature>
<feature type="binding site" evidence="2">
    <location>
        <position position="104"/>
    </location>
    <ligand>
        <name>Zn(2+)</name>
        <dbReference type="ChEBI" id="CHEBI:29105"/>
        <note>catalytic</note>
    </ligand>
</feature>
<feature type="binding site" evidence="2">
    <location>
        <position position="108"/>
    </location>
    <ligand>
        <name>Zn(2+)</name>
        <dbReference type="ChEBI" id="CHEBI:29105"/>
        <note>catalytic</note>
    </ligand>
</feature>
<feature type="binding site" evidence="2">
    <location>
        <position position="205"/>
    </location>
    <ligand>
        <name>Zn(2+)</name>
        <dbReference type="ChEBI" id="CHEBI:29105"/>
        <note>catalytic</note>
    </ligand>
</feature>
<feature type="modified residue" description="N6-acetyllysine" evidence="12">
    <location>
        <position position="759"/>
    </location>
</feature>
<feature type="modified residue" description="N6-acetyllysine; alternate" evidence="11">
    <location>
        <position position="770"/>
    </location>
</feature>
<feature type="modified residue" description="N6-succinyllysine; alternate" evidence="12">
    <location>
        <position position="770"/>
    </location>
</feature>
<feature type="modified residue" description="N6-succinyllysine" evidence="12">
    <location>
        <position position="848"/>
    </location>
</feature>
<feature type="modified residue" description="N6-acetyllysine" evidence="11">
    <location>
        <position position="883"/>
    </location>
</feature>
<feature type="modified residue" description="N6-succinyllysine" evidence="12">
    <location>
        <position position="945"/>
    </location>
</feature>
<feature type="disulfide bond" evidence="2">
    <location>
        <begin position="119"/>
        <end position="556"/>
    </location>
</feature>
<feature type="splice variant" id="VSP_020598" description="In isoform 2 and isoform 3." evidence="6">
    <location>
        <position position="20"/>
    </location>
</feature>
<feature type="splice variant" id="VSP_020599" description="In isoform 3." evidence="6">
    <location>
        <begin position="380"/>
        <end position="417"/>
    </location>
</feature>
<feature type="sequence variant" description="In strain: LG/J and SM/J." evidence="5">
    <original>R</original>
    <variation>Q</variation>
    <location>
        <position position="15"/>
    </location>
</feature>
<feature type="sequence variant" description="In strain: LG/J and SM/J." evidence="5">
    <original>S</original>
    <variation>I</variation>
    <location>
        <position position="17"/>
    </location>
</feature>
<feature type="sequence variant" description="In strain: LG/J and SM/J." evidence="5">
    <original>G</original>
    <variation>C</variation>
    <location>
        <position position="19"/>
    </location>
</feature>
<feature type="sequence variant" description="In strain: LG/J and SM/J." evidence="5">
    <original>V</original>
    <variation>M</variation>
    <location>
        <position position="462"/>
    </location>
</feature>
<feature type="sequence variant" description="In strain: LG/J and SM/J." evidence="5">
    <original>T</original>
    <variation>K</variation>
    <location>
        <position position="546"/>
    </location>
</feature>
<feature type="sequence variant" description="In strain: LG/J and SM/J." evidence="5">
    <original>I</original>
    <variation>V</variation>
    <location>
        <position position="583"/>
    </location>
</feature>
<feature type="sequence conflict" description="In Ref. 3; BAE37695." evidence="7" ref="3">
    <original>R</original>
    <variation>G</variation>
    <location>
        <position position="7"/>
    </location>
</feature>
<feature type="sequence conflict" description="In Ref. 3; BAE39514." evidence="7" ref="3">
    <original>E</original>
    <variation>D</variation>
    <location>
        <position position="283"/>
    </location>
</feature>
<feature type="sequence conflict" description="In Ref. 3; BAE24630." evidence="7" ref="3">
    <original>Y</original>
    <variation>C</variation>
    <location>
        <position position="388"/>
    </location>
</feature>
<feature type="sequence conflict" description="In Ref. 2; AAX11356." evidence="7" ref="2">
    <original>Q</original>
    <variation>P</variation>
    <location>
        <position position="394"/>
    </location>
</feature>
<feature type="sequence conflict" description="In Ref. 3; BAE40273." evidence="7" ref="3">
    <original>R</original>
    <variation>M</variation>
    <location>
        <position position="475"/>
    </location>
</feature>
<feature type="sequence conflict" description="In Ref. 4; BAC98102." evidence="7" ref="4">
    <original>V</original>
    <variation>L</variation>
    <location>
        <position position="652"/>
    </location>
</feature>
<feature type="sequence conflict" description="In Ref. 3; BAE40273." evidence="7" ref="3">
    <original>A</original>
    <variation>T</variation>
    <location>
        <position position="830"/>
    </location>
</feature>